<gene>
    <name evidence="1" type="primary">murC</name>
    <name type="ordered locus">Ping_1148</name>
</gene>
<name>MURC_PSYIN</name>
<proteinExistence type="inferred from homology"/>
<reference key="1">
    <citation type="journal article" date="2008" name="BMC Genomics">
        <title>Genomics of an extreme psychrophile, Psychromonas ingrahamii.</title>
        <authorList>
            <person name="Riley M."/>
            <person name="Staley J.T."/>
            <person name="Danchin A."/>
            <person name="Wang T.Z."/>
            <person name="Brettin T.S."/>
            <person name="Hauser L.J."/>
            <person name="Land M.L."/>
            <person name="Thompson L.S."/>
        </authorList>
    </citation>
    <scope>NUCLEOTIDE SEQUENCE [LARGE SCALE GENOMIC DNA]</scope>
    <source>
        <strain>DSM 17664 / CCUG 51855 / 37</strain>
    </source>
</reference>
<protein>
    <recommendedName>
        <fullName evidence="1">UDP-N-acetylmuramate--L-alanine ligase</fullName>
        <ecNumber evidence="1">6.3.2.8</ecNumber>
    </recommendedName>
    <alternativeName>
        <fullName evidence="1">UDP-N-acetylmuramoyl-L-alanine synthetase</fullName>
    </alternativeName>
</protein>
<keyword id="KW-0067">ATP-binding</keyword>
<keyword id="KW-0131">Cell cycle</keyword>
<keyword id="KW-0132">Cell division</keyword>
<keyword id="KW-0133">Cell shape</keyword>
<keyword id="KW-0961">Cell wall biogenesis/degradation</keyword>
<keyword id="KW-0963">Cytoplasm</keyword>
<keyword id="KW-0436">Ligase</keyword>
<keyword id="KW-0547">Nucleotide-binding</keyword>
<keyword id="KW-0573">Peptidoglycan synthesis</keyword>
<keyword id="KW-1185">Reference proteome</keyword>
<comment type="function">
    <text evidence="1">Cell wall formation.</text>
</comment>
<comment type="catalytic activity">
    <reaction evidence="1">
        <text>UDP-N-acetyl-alpha-D-muramate + L-alanine + ATP = UDP-N-acetyl-alpha-D-muramoyl-L-alanine + ADP + phosphate + H(+)</text>
        <dbReference type="Rhea" id="RHEA:23372"/>
        <dbReference type="ChEBI" id="CHEBI:15378"/>
        <dbReference type="ChEBI" id="CHEBI:30616"/>
        <dbReference type="ChEBI" id="CHEBI:43474"/>
        <dbReference type="ChEBI" id="CHEBI:57972"/>
        <dbReference type="ChEBI" id="CHEBI:70757"/>
        <dbReference type="ChEBI" id="CHEBI:83898"/>
        <dbReference type="ChEBI" id="CHEBI:456216"/>
        <dbReference type="EC" id="6.3.2.8"/>
    </reaction>
</comment>
<comment type="pathway">
    <text evidence="1">Cell wall biogenesis; peptidoglycan biosynthesis.</text>
</comment>
<comment type="subcellular location">
    <subcellularLocation>
        <location evidence="1">Cytoplasm</location>
    </subcellularLocation>
</comment>
<comment type="similarity">
    <text evidence="1">Belongs to the MurCDEF family.</text>
</comment>
<dbReference type="EC" id="6.3.2.8" evidence="1"/>
<dbReference type="EMBL" id="CP000510">
    <property type="protein sequence ID" value="ABM02985.1"/>
    <property type="molecule type" value="Genomic_DNA"/>
</dbReference>
<dbReference type="RefSeq" id="WP_011769548.1">
    <property type="nucleotide sequence ID" value="NC_008709.1"/>
</dbReference>
<dbReference type="SMR" id="A1SU20"/>
<dbReference type="STRING" id="357804.Ping_1148"/>
<dbReference type="KEGG" id="pin:Ping_1148"/>
<dbReference type="eggNOG" id="COG0773">
    <property type="taxonomic scope" value="Bacteria"/>
</dbReference>
<dbReference type="HOGENOM" id="CLU_028104_2_2_6"/>
<dbReference type="OrthoDB" id="9804126at2"/>
<dbReference type="UniPathway" id="UPA00219"/>
<dbReference type="Proteomes" id="UP000000639">
    <property type="component" value="Chromosome"/>
</dbReference>
<dbReference type="GO" id="GO:0005737">
    <property type="term" value="C:cytoplasm"/>
    <property type="evidence" value="ECO:0007669"/>
    <property type="project" value="UniProtKB-SubCell"/>
</dbReference>
<dbReference type="GO" id="GO:0005524">
    <property type="term" value="F:ATP binding"/>
    <property type="evidence" value="ECO:0007669"/>
    <property type="project" value="UniProtKB-UniRule"/>
</dbReference>
<dbReference type="GO" id="GO:0008763">
    <property type="term" value="F:UDP-N-acetylmuramate-L-alanine ligase activity"/>
    <property type="evidence" value="ECO:0007669"/>
    <property type="project" value="UniProtKB-UniRule"/>
</dbReference>
<dbReference type="GO" id="GO:0051301">
    <property type="term" value="P:cell division"/>
    <property type="evidence" value="ECO:0007669"/>
    <property type="project" value="UniProtKB-KW"/>
</dbReference>
<dbReference type="GO" id="GO:0071555">
    <property type="term" value="P:cell wall organization"/>
    <property type="evidence" value="ECO:0007669"/>
    <property type="project" value="UniProtKB-KW"/>
</dbReference>
<dbReference type="GO" id="GO:0009252">
    <property type="term" value="P:peptidoglycan biosynthetic process"/>
    <property type="evidence" value="ECO:0007669"/>
    <property type="project" value="UniProtKB-UniRule"/>
</dbReference>
<dbReference type="GO" id="GO:0008360">
    <property type="term" value="P:regulation of cell shape"/>
    <property type="evidence" value="ECO:0007669"/>
    <property type="project" value="UniProtKB-KW"/>
</dbReference>
<dbReference type="FunFam" id="3.40.1190.10:FF:000001">
    <property type="entry name" value="UDP-N-acetylmuramate--L-alanine ligase"/>
    <property type="match status" value="1"/>
</dbReference>
<dbReference type="FunFam" id="3.40.50.720:FF:000046">
    <property type="entry name" value="UDP-N-acetylmuramate--L-alanine ligase"/>
    <property type="match status" value="1"/>
</dbReference>
<dbReference type="Gene3D" id="3.90.190.20">
    <property type="entry name" value="Mur ligase, C-terminal domain"/>
    <property type="match status" value="1"/>
</dbReference>
<dbReference type="Gene3D" id="3.40.1190.10">
    <property type="entry name" value="Mur-like, catalytic domain"/>
    <property type="match status" value="1"/>
</dbReference>
<dbReference type="Gene3D" id="3.40.50.720">
    <property type="entry name" value="NAD(P)-binding Rossmann-like Domain"/>
    <property type="match status" value="1"/>
</dbReference>
<dbReference type="HAMAP" id="MF_00046">
    <property type="entry name" value="MurC"/>
    <property type="match status" value="1"/>
</dbReference>
<dbReference type="InterPro" id="IPR036565">
    <property type="entry name" value="Mur-like_cat_sf"/>
</dbReference>
<dbReference type="InterPro" id="IPR004101">
    <property type="entry name" value="Mur_ligase_C"/>
</dbReference>
<dbReference type="InterPro" id="IPR036615">
    <property type="entry name" value="Mur_ligase_C_dom_sf"/>
</dbReference>
<dbReference type="InterPro" id="IPR013221">
    <property type="entry name" value="Mur_ligase_cen"/>
</dbReference>
<dbReference type="InterPro" id="IPR000713">
    <property type="entry name" value="Mur_ligase_N"/>
</dbReference>
<dbReference type="InterPro" id="IPR050061">
    <property type="entry name" value="MurCDEF_pg_biosynth"/>
</dbReference>
<dbReference type="InterPro" id="IPR005758">
    <property type="entry name" value="UDP-N-AcMur_Ala_ligase_MurC"/>
</dbReference>
<dbReference type="NCBIfam" id="TIGR01082">
    <property type="entry name" value="murC"/>
    <property type="match status" value="1"/>
</dbReference>
<dbReference type="PANTHER" id="PTHR43445:SF3">
    <property type="entry name" value="UDP-N-ACETYLMURAMATE--L-ALANINE LIGASE"/>
    <property type="match status" value="1"/>
</dbReference>
<dbReference type="PANTHER" id="PTHR43445">
    <property type="entry name" value="UDP-N-ACETYLMURAMATE--L-ALANINE LIGASE-RELATED"/>
    <property type="match status" value="1"/>
</dbReference>
<dbReference type="Pfam" id="PF01225">
    <property type="entry name" value="Mur_ligase"/>
    <property type="match status" value="1"/>
</dbReference>
<dbReference type="Pfam" id="PF02875">
    <property type="entry name" value="Mur_ligase_C"/>
    <property type="match status" value="1"/>
</dbReference>
<dbReference type="Pfam" id="PF08245">
    <property type="entry name" value="Mur_ligase_M"/>
    <property type="match status" value="1"/>
</dbReference>
<dbReference type="SUPFAM" id="SSF51984">
    <property type="entry name" value="MurCD N-terminal domain"/>
    <property type="match status" value="1"/>
</dbReference>
<dbReference type="SUPFAM" id="SSF53623">
    <property type="entry name" value="MurD-like peptide ligases, catalytic domain"/>
    <property type="match status" value="1"/>
</dbReference>
<dbReference type="SUPFAM" id="SSF53244">
    <property type="entry name" value="MurD-like peptide ligases, peptide-binding domain"/>
    <property type="match status" value="1"/>
</dbReference>
<feature type="chain" id="PRO_1000074749" description="UDP-N-acetylmuramate--L-alanine ligase">
    <location>
        <begin position="1"/>
        <end position="487"/>
    </location>
</feature>
<feature type="binding site" evidence="1">
    <location>
        <begin position="126"/>
        <end position="132"/>
    </location>
    <ligand>
        <name>ATP</name>
        <dbReference type="ChEBI" id="CHEBI:30616"/>
    </ligand>
</feature>
<sequence length="487" mass="53380">MIKIDLAQIRTTVPEMRRVKQIHFVGIGGAGMGGIAEVLAYEGYKISGSDIAENPVVRRLRSLGAEIFIGHQQDNIYGASVVVVSTAINADNPELLAAQQARIPVVRRAEMLAELMRYRHGVAVSGTHGKTTTTSLIASIYGQAQLDPTFVIGGLLNSAGTNAKLGQSRYLIAEADESDASFLHLQPMVSVVTNIEADHMDTYEGNFEVLKDTFVRFIQNLPFYGTAVVCLDDAVIEQLIPRFARQTVTYGFHEQADVRISDFSQCVNRSEFSVHRINKPAMKIQLNLPGKHNALNAAAAIAVAMEDDIDDFSISKALNEFAGIGRRFEQYGEFETGRGKAILVDDYGHHPTEVQATIDAARAAWPDKRLVMAYQPHRYTRTRDLYEDFAHVLAQVDQLLLLDVYAAGETPIAGADSRSLCRTIRQRSGKEPIFVASPEVLPAMLAQIIDDGDLVLTQGAGNIGAVVKTLAELQLNIEKMKKASRVQ</sequence>
<organism>
    <name type="scientific">Psychromonas ingrahamii (strain DSM 17664 / CCUG 51855 / 37)</name>
    <dbReference type="NCBI Taxonomy" id="357804"/>
    <lineage>
        <taxon>Bacteria</taxon>
        <taxon>Pseudomonadati</taxon>
        <taxon>Pseudomonadota</taxon>
        <taxon>Gammaproteobacteria</taxon>
        <taxon>Alteromonadales</taxon>
        <taxon>Psychromonadaceae</taxon>
        <taxon>Psychromonas</taxon>
    </lineage>
</organism>
<accession>A1SU20</accession>
<evidence type="ECO:0000255" key="1">
    <source>
        <dbReference type="HAMAP-Rule" id="MF_00046"/>
    </source>
</evidence>